<keyword id="KW-0002">3D-structure</keyword>
<keyword id="KW-0274">FAD</keyword>
<keyword id="KW-0285">Flavoprotein</keyword>
<keyword id="KW-0349">Heme</keyword>
<keyword id="KW-0408">Iron</keyword>
<keyword id="KW-0479">Metal-binding</keyword>
<keyword id="KW-0500">Molybdenum</keyword>
<keyword id="KW-0534">Nitrate assimilation</keyword>
<keyword id="KW-0560">Oxidoreductase</keyword>
<name>NIA_ULVPR</name>
<protein>
    <recommendedName>
        <fullName evidence="7">Nitrate reductase [NADH]</fullName>
        <shortName evidence="6">NR</shortName>
        <ecNumber evidence="5">1.7.1.1</ecNumber>
    </recommendedName>
</protein>
<sequence>MGVRHSASKDYIAGRPLVPGEAPLDKKNSNFSSWKPVTEIDDRDAKCADNWVPRHPDLIRLTGKHPFNSEPPHADVMKEGWLTPVSMHFVRNHGAVPRLEWGSHRITITGLVERPMEITMDDIAKLPAVTVPCLLTCCGNRRKEVNMVKNSQGFSWGPGAVSVNNWTGARLSDVLKLVGVKSQAQGAKYVHFCGPKGELPKGVDGSYGTALTLGHALDPSMDVLIAYKQNGQFLHPDHGFPCRMLIPGWIGGRSVKWLSHLHVSDKDSQNWYHFHDNKVLPPHVDAESAAKQGWWKDPSFILKELNINSTISSPGHDERILMDQNRRYTMKGYAYSGGGRKIVRVEVSFNGGETWSHPAKIIVTETPNQAGKHWTWVHWELPVDTSQFFTATEVVCRAWDESQNTQPAVLTWTLLGQGNNSMFRLRLHKEVDPQGRLCIRFQQPAPILPGPLGNVGWREQEAGSAVPSAPAAVAAAAPGLDSTKKYVTKAMLEQHVEEASVWFAYKGKVYDGTKFLDDHPGGADSILMAGGEDATEDFDAVHSDSAKKQLEQFYIAELAPEGVPVPANLLYGGVDAAVVVMPGTAAAPLPAIDVDAPFLNPKKQKAAELKEKIKISHDVTLFRFGLEHDEQLLGLPTGKHMLIRKKVTNAEGDEEVVMRAYTPTTANETRGHFDLVVKIYKANVHPKFPEGGKFSQILEALEVGDTVEVKGPIGHFHYDRPGHYKNHKLESEVKRINMIAGGTGLTPMYQVMKAILSNPSDLTEIRLLYANQTEADILLRPELEALAKSHPDRVKIHYTVDRPTPGWKYSSGFIDLDMCERALFRYEPGTISVLCGPPPMLKFACHPNLEKMGFEKGVTSIEF</sequence>
<comment type="function">
    <text evidence="7">Nitrate reductase is a key enzyme involved in the first step of nitrate assimilation in plants, fungi and bacteria.</text>
</comment>
<comment type="catalytic activity">
    <reaction evidence="5">
        <text>nitrite + NAD(+) + H2O = nitrate + NADH + H(+)</text>
        <dbReference type="Rhea" id="RHEA:17913"/>
        <dbReference type="ChEBI" id="CHEBI:15377"/>
        <dbReference type="ChEBI" id="CHEBI:15378"/>
        <dbReference type="ChEBI" id="CHEBI:16301"/>
        <dbReference type="ChEBI" id="CHEBI:17632"/>
        <dbReference type="ChEBI" id="CHEBI:57540"/>
        <dbReference type="ChEBI" id="CHEBI:57945"/>
        <dbReference type="EC" id="1.7.1.1"/>
    </reaction>
</comment>
<comment type="cofactor">
    <cofactor evidence="5">
        <name>FAD</name>
        <dbReference type="ChEBI" id="CHEBI:57692"/>
    </cofactor>
    <text evidence="5">Binds 1 FAD (per monomer/chain).</text>
</comment>
<comment type="cofactor">
    <cofactor evidence="1">
        <name>Mo-molybdopterin</name>
        <dbReference type="ChEBI" id="CHEBI:71302"/>
    </cofactor>
    <text evidence="1">Binds 1 Mo-molybdopterin (Mo-MPT) cofactor per subunit.</text>
</comment>
<comment type="cofactor">
    <cofactor evidence="8">
        <name>heme</name>
        <dbReference type="ChEBI" id="CHEBI:30413"/>
    </cofactor>
    <text evidence="7">Binds 1 heme group. The heme group is called cytochrome b-557.</text>
</comment>
<comment type="biophysicochemical properties">
    <kinetics>
        <KM evidence="5">13 uM for NADH in the ferricyanide reduction by the FAD-binding domain (at ph 7.0 and 25 degrees Celsius)</KM>
        <Vmax evidence="5">9055.0 umol/min/mg enzyme in the ferricyanide reduction by the FAD-binding domain (at ph 7.0 and 25 degrees Celsius)</Vmax>
        <text evidence="5">kcat is 4900 sec(-1) for NADH in the ferricyanide reduction by the FAD-binding domain (at ph 7.0 and 25 degrees Celsius).</text>
    </kinetics>
</comment>
<comment type="subunit">
    <text evidence="7">Homodimer.</text>
</comment>
<comment type="induction">
    <text evidence="4">By nitrate. Repressed by ammonium, the repression is not removed by the addition of extra nitrate. Urea weakens the effect of nitrate, but does not repress expression itself, implying it possibly reduces nitrate uptake rather than nitrate reduction. Up-regulated by nitrite.</text>
</comment>
<comment type="similarity">
    <text evidence="7">Belongs to the nitrate reductase family.</text>
</comment>
<evidence type="ECO:0000250" key="1">
    <source>
        <dbReference type="UniProtKB" id="P49050"/>
    </source>
</evidence>
<evidence type="ECO:0000255" key="2">
    <source>
        <dbReference type="PROSITE-ProRule" id="PRU00279"/>
    </source>
</evidence>
<evidence type="ECO:0000255" key="3">
    <source>
        <dbReference type="PROSITE-ProRule" id="PRU00716"/>
    </source>
</evidence>
<evidence type="ECO:0000269" key="4">
    <source>
    </source>
</evidence>
<evidence type="ECO:0000269" key="5">
    <source>
    </source>
</evidence>
<evidence type="ECO:0000303" key="6">
    <source>
    </source>
</evidence>
<evidence type="ECO:0000305" key="7"/>
<evidence type="ECO:0000305" key="8">
    <source>
    </source>
</evidence>
<evidence type="ECO:0000312" key="9">
    <source>
        <dbReference type="EMBL" id="ASV49154.1"/>
    </source>
</evidence>
<evidence type="ECO:0007744" key="10">
    <source>
        <dbReference type="PDB" id="5YLY"/>
    </source>
</evidence>
<evidence type="ECO:0007829" key="11">
    <source>
        <dbReference type="PDB" id="5YLY"/>
    </source>
</evidence>
<feature type="chain" id="PRO_0000450331" description="Nitrate reductase [NADH]">
    <location>
        <begin position="1"/>
        <end position="863"/>
    </location>
</feature>
<feature type="domain" description="Cytochrome b5 heme-binding" evidence="2">
    <location>
        <begin position="484"/>
        <end position="559"/>
    </location>
</feature>
<feature type="domain" description="FAD-binding FR-type" evidence="3">
    <location>
        <begin position="602"/>
        <end position="719"/>
    </location>
</feature>
<feature type="binding site" evidence="1">
    <location>
        <position position="137"/>
    </location>
    <ligand>
        <name>Mo-molybdopterin</name>
        <dbReference type="ChEBI" id="CHEBI:71302"/>
    </ligand>
    <ligandPart>
        <name>Mo</name>
        <dbReference type="ChEBI" id="CHEBI:28685"/>
    </ligandPart>
</feature>
<feature type="binding site" description="axial binding residue" evidence="2">
    <location>
        <position position="519"/>
    </location>
    <ligand>
        <name>heme</name>
        <dbReference type="ChEBI" id="CHEBI:30413"/>
    </ligand>
    <ligandPart>
        <name>Fe</name>
        <dbReference type="ChEBI" id="CHEBI:18248"/>
    </ligandPart>
</feature>
<feature type="binding site" description="axial binding residue" evidence="2">
    <location>
        <position position="542"/>
    </location>
    <ligand>
        <name>heme</name>
        <dbReference type="ChEBI" id="CHEBI:30413"/>
    </ligand>
    <ligandPart>
        <name>Fe</name>
        <dbReference type="ChEBI" id="CHEBI:18248"/>
    </ligandPart>
</feature>
<feature type="binding site" evidence="5 10">
    <location>
        <begin position="659"/>
        <end position="662"/>
    </location>
    <ligand>
        <name>FAD</name>
        <dbReference type="ChEBI" id="CHEBI:57692"/>
    </ligand>
</feature>
<feature type="binding site" evidence="5 10">
    <location>
        <begin position="676"/>
        <end position="680"/>
    </location>
    <ligand>
        <name>FAD</name>
        <dbReference type="ChEBI" id="CHEBI:57692"/>
    </ligand>
</feature>
<feature type="binding site" evidence="5 10">
    <location>
        <position position="688"/>
    </location>
    <ligand>
        <name>FAD</name>
        <dbReference type="ChEBI" id="CHEBI:57692"/>
    </ligand>
</feature>
<feature type="binding site" evidence="5 10">
    <location>
        <begin position="693"/>
        <end position="695"/>
    </location>
    <ligand>
        <name>FAD</name>
        <dbReference type="ChEBI" id="CHEBI:57692"/>
    </ligand>
</feature>
<feature type="binding site" evidence="5 10">
    <location>
        <position position="746"/>
    </location>
    <ligand>
        <name>FAD</name>
        <dbReference type="ChEBI" id="CHEBI:57692"/>
    </ligand>
</feature>
<feature type="mutagenesis site" description="Minimal effect in enzyme activity and a minor change in affinity for NADH." evidence="5">
    <original>H</original>
    <variation>A</variation>
    <location>
        <position position="640"/>
    </location>
</feature>
<feature type="mutagenesis site" description="Loss of enzyme activity to 13% of that of the wild-type and decreased affinity for NADH." evidence="5">
    <original>R</original>
    <variation>A</variation>
    <location>
        <position position="659"/>
    </location>
</feature>
<feature type="mutagenesis site" description="Loss of enzyme activity to 18% of that of the wild-type and decreased affinity for NADH." evidence="5">
    <original>T</original>
    <variation>A</variation>
    <location>
        <position position="662"/>
    </location>
</feature>
<feature type="mutagenesis site" description="Loss of enzyme activity to 21% of that of the wild-type, but increased affinity for NADH." evidence="5">
    <original>C</original>
    <variation>A</variation>
    <location>
        <position position="835"/>
    </location>
</feature>
<feature type="strand" evidence="11">
    <location>
        <begin position="605"/>
        <end position="616"/>
    </location>
</feature>
<feature type="strand" evidence="11">
    <location>
        <begin position="619"/>
        <end position="625"/>
    </location>
</feature>
<feature type="strand" evidence="11">
    <location>
        <begin position="640"/>
        <end position="646"/>
    </location>
</feature>
<feature type="strand" evidence="11">
    <location>
        <begin position="656"/>
        <end position="661"/>
    </location>
</feature>
<feature type="strand" evidence="11">
    <location>
        <begin position="671"/>
        <end position="678"/>
    </location>
</feature>
<feature type="strand" evidence="11">
    <location>
        <begin position="684"/>
        <end position="687"/>
    </location>
</feature>
<feature type="helix" evidence="11">
    <location>
        <begin position="693"/>
        <end position="700"/>
    </location>
</feature>
<feature type="strand" evidence="11">
    <location>
        <begin position="706"/>
        <end position="713"/>
    </location>
</feature>
<feature type="strand" evidence="11">
    <location>
        <begin position="715"/>
        <end position="720"/>
    </location>
</feature>
<feature type="strand" evidence="11">
    <location>
        <begin position="723"/>
        <end position="726"/>
    </location>
</feature>
<feature type="strand" evidence="11">
    <location>
        <begin position="729"/>
        <end position="732"/>
    </location>
</feature>
<feature type="strand" evidence="11">
    <location>
        <begin position="734"/>
        <end position="741"/>
    </location>
</feature>
<feature type="helix" evidence="11">
    <location>
        <begin position="742"/>
        <end position="744"/>
    </location>
</feature>
<feature type="helix" evidence="11">
    <location>
        <begin position="745"/>
        <end position="756"/>
    </location>
</feature>
<feature type="strand" evidence="11">
    <location>
        <begin position="764"/>
        <end position="773"/>
    </location>
</feature>
<feature type="helix" evidence="11">
    <location>
        <begin position="774"/>
        <end position="776"/>
    </location>
</feature>
<feature type="helix" evidence="11">
    <location>
        <begin position="780"/>
        <end position="789"/>
    </location>
</feature>
<feature type="turn" evidence="11">
    <location>
        <begin position="791"/>
        <end position="793"/>
    </location>
</feature>
<feature type="strand" evidence="11">
    <location>
        <begin position="794"/>
        <end position="802"/>
    </location>
</feature>
<feature type="strand" evidence="11">
    <location>
        <begin position="809"/>
        <end position="813"/>
    </location>
</feature>
<feature type="helix" evidence="11">
    <location>
        <begin position="816"/>
        <end position="822"/>
    </location>
</feature>
<feature type="strand" evidence="11">
    <location>
        <begin position="830"/>
        <end position="836"/>
    </location>
</feature>
<feature type="helix" evidence="11">
    <location>
        <begin position="838"/>
        <end position="843"/>
    </location>
</feature>
<feature type="helix" evidence="11">
    <location>
        <begin position="846"/>
        <end position="851"/>
    </location>
</feature>
<feature type="turn" evidence="11">
    <location>
        <begin position="856"/>
        <end position="858"/>
    </location>
</feature>
<feature type="strand" evidence="11">
    <location>
        <begin position="859"/>
        <end position="862"/>
    </location>
</feature>
<organism>
    <name type="scientific">Ulva prolifera</name>
    <name type="common">Green seaweed</name>
    <name type="synonym">Enteromorpha prolifera</name>
    <dbReference type="NCBI Taxonomy" id="3117"/>
    <lineage>
        <taxon>Eukaryota</taxon>
        <taxon>Viridiplantae</taxon>
        <taxon>Chlorophyta</taxon>
        <taxon>Ulvophyceae</taxon>
        <taxon>OUU clade</taxon>
        <taxon>Ulvales</taxon>
        <taxon>Ulvaceae</taxon>
        <taxon>Ulva</taxon>
    </lineage>
</organism>
<accession>A0A286R227</accession>
<proteinExistence type="evidence at protein level"/>
<dbReference type="EC" id="1.7.1.1" evidence="5"/>
<dbReference type="EMBL" id="KY438973">
    <property type="protein sequence ID" value="ASV49153.1"/>
    <property type="molecule type" value="Genomic_DNA"/>
</dbReference>
<dbReference type="EMBL" id="KY438974">
    <property type="protein sequence ID" value="ASV49154.1"/>
    <property type="molecule type" value="mRNA"/>
</dbReference>
<dbReference type="PDB" id="5YLY">
    <property type="method" value="X-ray"/>
    <property type="resolution" value="1.76 A"/>
    <property type="chains" value="A/B=572-863"/>
</dbReference>
<dbReference type="PDBsum" id="5YLY"/>
<dbReference type="SMR" id="A0A286R227"/>
<dbReference type="GO" id="GO:0071949">
    <property type="term" value="F:FAD binding"/>
    <property type="evidence" value="ECO:0000314"/>
    <property type="project" value="UniProtKB"/>
</dbReference>
<dbReference type="GO" id="GO:0020037">
    <property type="term" value="F:heme binding"/>
    <property type="evidence" value="ECO:0007669"/>
    <property type="project" value="InterPro"/>
</dbReference>
<dbReference type="GO" id="GO:0030151">
    <property type="term" value="F:molybdenum ion binding"/>
    <property type="evidence" value="ECO:0000250"/>
    <property type="project" value="UniProtKB"/>
</dbReference>
<dbReference type="GO" id="GO:0043546">
    <property type="term" value="F:molybdopterin cofactor binding"/>
    <property type="evidence" value="ECO:0000250"/>
    <property type="project" value="UniProtKB"/>
</dbReference>
<dbReference type="GO" id="GO:0009703">
    <property type="term" value="F:nitrate reductase (NADH) activity"/>
    <property type="evidence" value="ECO:0007669"/>
    <property type="project" value="UniProtKB-EC"/>
</dbReference>
<dbReference type="GO" id="GO:0008940">
    <property type="term" value="F:nitrate reductase activity"/>
    <property type="evidence" value="ECO:0000314"/>
    <property type="project" value="UniProtKB"/>
</dbReference>
<dbReference type="GO" id="GO:0008482">
    <property type="term" value="F:sulfite oxidase activity"/>
    <property type="evidence" value="ECO:0007669"/>
    <property type="project" value="TreeGrafter"/>
</dbReference>
<dbReference type="GO" id="GO:0071250">
    <property type="term" value="P:cellular response to nitrite"/>
    <property type="evidence" value="ECO:0000270"/>
    <property type="project" value="UniProtKB"/>
</dbReference>
<dbReference type="GO" id="GO:0042128">
    <property type="term" value="P:nitrate assimilation"/>
    <property type="evidence" value="ECO:0007669"/>
    <property type="project" value="UniProtKB-KW"/>
</dbReference>
<dbReference type="GO" id="GO:0042126">
    <property type="term" value="P:nitrate metabolic process"/>
    <property type="evidence" value="ECO:0000270"/>
    <property type="project" value="UniProtKB"/>
</dbReference>
<dbReference type="GO" id="GO:0006790">
    <property type="term" value="P:sulfur compound metabolic process"/>
    <property type="evidence" value="ECO:0007669"/>
    <property type="project" value="TreeGrafter"/>
</dbReference>
<dbReference type="CDD" id="cd06183">
    <property type="entry name" value="cyt_b5_reduct_like"/>
    <property type="match status" value="1"/>
</dbReference>
<dbReference type="FunFam" id="2.40.30.10:FF:000021">
    <property type="entry name" value="NADH-cytochrome b5 reductase"/>
    <property type="match status" value="1"/>
</dbReference>
<dbReference type="FunFam" id="3.40.50.80:FF:000009">
    <property type="entry name" value="NADH-cytochrome b5 reductase"/>
    <property type="match status" value="1"/>
</dbReference>
<dbReference type="FunFam" id="3.90.420.10:FF:000003">
    <property type="entry name" value="Nitrate reductase"/>
    <property type="match status" value="1"/>
</dbReference>
<dbReference type="Gene3D" id="2.60.40.650">
    <property type="match status" value="1"/>
</dbReference>
<dbReference type="Gene3D" id="3.10.120.10">
    <property type="entry name" value="Cytochrome b5-like heme/steroid binding domain"/>
    <property type="match status" value="1"/>
</dbReference>
<dbReference type="Gene3D" id="3.40.50.80">
    <property type="entry name" value="Nucleotide-binding domain of ferredoxin-NADP reductase (FNR) module"/>
    <property type="match status" value="1"/>
</dbReference>
<dbReference type="Gene3D" id="3.90.420.10">
    <property type="entry name" value="Oxidoreductase, molybdopterin-binding domain"/>
    <property type="match status" value="1"/>
</dbReference>
<dbReference type="Gene3D" id="2.40.30.10">
    <property type="entry name" value="Translation factors"/>
    <property type="match status" value="1"/>
</dbReference>
<dbReference type="InterPro" id="IPR008333">
    <property type="entry name" value="Cbr1-like_FAD-bd_dom"/>
</dbReference>
<dbReference type="InterPro" id="IPR001199">
    <property type="entry name" value="Cyt_B5-like_heme/steroid-bd"/>
</dbReference>
<dbReference type="InterPro" id="IPR036400">
    <property type="entry name" value="Cyt_B5-like_heme/steroid_sf"/>
</dbReference>
<dbReference type="InterPro" id="IPR018506">
    <property type="entry name" value="Cyt_B5_heme-BS"/>
</dbReference>
<dbReference type="InterPro" id="IPR017927">
    <property type="entry name" value="FAD-bd_FR_type"/>
</dbReference>
<dbReference type="InterPro" id="IPR001709">
    <property type="entry name" value="Flavoprot_Pyr_Nucl_cyt_Rdtase"/>
</dbReference>
<dbReference type="InterPro" id="IPR039261">
    <property type="entry name" value="FNR_nucleotide-bd"/>
</dbReference>
<dbReference type="InterPro" id="IPR014756">
    <property type="entry name" value="Ig_E-set"/>
</dbReference>
<dbReference type="InterPro" id="IPR005066">
    <property type="entry name" value="MoCF_OxRdtse_dimer"/>
</dbReference>
<dbReference type="InterPro" id="IPR008335">
    <property type="entry name" value="Mopterin_OxRdtase_euk"/>
</dbReference>
<dbReference type="InterPro" id="IPR001433">
    <property type="entry name" value="OxRdtase_FAD/NAD-bd"/>
</dbReference>
<dbReference type="InterPro" id="IPR000572">
    <property type="entry name" value="OxRdtase_Mopterin-bd_dom"/>
</dbReference>
<dbReference type="InterPro" id="IPR036374">
    <property type="entry name" value="OxRdtase_Mopterin-bd_sf"/>
</dbReference>
<dbReference type="InterPro" id="IPR022407">
    <property type="entry name" value="OxRdtase_Mopterin_BS"/>
</dbReference>
<dbReference type="InterPro" id="IPR017938">
    <property type="entry name" value="Riboflavin_synthase-like_b-brl"/>
</dbReference>
<dbReference type="PANTHER" id="PTHR19372:SF7">
    <property type="entry name" value="SULFITE OXIDASE, MITOCHONDRIAL"/>
    <property type="match status" value="1"/>
</dbReference>
<dbReference type="PANTHER" id="PTHR19372">
    <property type="entry name" value="SULFITE REDUCTASE"/>
    <property type="match status" value="1"/>
</dbReference>
<dbReference type="Pfam" id="PF00173">
    <property type="entry name" value="Cyt-b5"/>
    <property type="match status" value="1"/>
</dbReference>
<dbReference type="Pfam" id="PF00970">
    <property type="entry name" value="FAD_binding_6"/>
    <property type="match status" value="1"/>
</dbReference>
<dbReference type="Pfam" id="PF03404">
    <property type="entry name" value="Mo-co_dimer"/>
    <property type="match status" value="1"/>
</dbReference>
<dbReference type="Pfam" id="PF00175">
    <property type="entry name" value="NAD_binding_1"/>
    <property type="match status" value="1"/>
</dbReference>
<dbReference type="Pfam" id="PF00174">
    <property type="entry name" value="Oxidored_molyb"/>
    <property type="match status" value="1"/>
</dbReference>
<dbReference type="PRINTS" id="PR00406">
    <property type="entry name" value="CYTB5RDTASE"/>
</dbReference>
<dbReference type="PRINTS" id="PR00363">
    <property type="entry name" value="CYTOCHROMEB5"/>
</dbReference>
<dbReference type="PRINTS" id="PR00407">
    <property type="entry name" value="EUMOPTERIN"/>
</dbReference>
<dbReference type="PRINTS" id="PR00371">
    <property type="entry name" value="FPNCR"/>
</dbReference>
<dbReference type="SMART" id="SM01117">
    <property type="entry name" value="Cyt-b5"/>
    <property type="match status" value="1"/>
</dbReference>
<dbReference type="SUPFAM" id="SSF55856">
    <property type="entry name" value="Cytochrome b5-like heme/steroid binding domain"/>
    <property type="match status" value="1"/>
</dbReference>
<dbReference type="SUPFAM" id="SSF81296">
    <property type="entry name" value="E set domains"/>
    <property type="match status" value="1"/>
</dbReference>
<dbReference type="SUPFAM" id="SSF52343">
    <property type="entry name" value="Ferredoxin reductase-like, C-terminal NADP-linked domain"/>
    <property type="match status" value="1"/>
</dbReference>
<dbReference type="SUPFAM" id="SSF56524">
    <property type="entry name" value="Oxidoreductase molybdopterin-binding domain"/>
    <property type="match status" value="1"/>
</dbReference>
<dbReference type="SUPFAM" id="SSF63380">
    <property type="entry name" value="Riboflavin synthase domain-like"/>
    <property type="match status" value="1"/>
</dbReference>
<dbReference type="PROSITE" id="PS00191">
    <property type="entry name" value="CYTOCHROME_B5_1"/>
    <property type="match status" value="1"/>
</dbReference>
<dbReference type="PROSITE" id="PS50255">
    <property type="entry name" value="CYTOCHROME_B5_2"/>
    <property type="match status" value="1"/>
</dbReference>
<dbReference type="PROSITE" id="PS51384">
    <property type="entry name" value="FAD_FR"/>
    <property type="match status" value="1"/>
</dbReference>
<dbReference type="PROSITE" id="PS00559">
    <property type="entry name" value="MOLYBDOPTERIN_EUK"/>
    <property type="match status" value="1"/>
</dbReference>
<reference evidence="9" key="1">
    <citation type="journal article" date="2017" name="J. Phycol.">
        <title>Cloning and characterization of nitrate reductase gene in Ulva prolifera (Ulvophyceae, Chlorophyta).</title>
        <authorList>
            <person name="Guo Y."/>
            <person name="Wang H.Z."/>
            <person name="Wu C.H."/>
            <person name="Fu H.H."/>
            <person name="Jiang P."/>
        </authorList>
    </citation>
    <scope>NUCLEOTIDE SEQUENCE [GENOMIC DNA / MRNA]</scope>
    <scope>INDUCTION</scope>
</reference>
<reference evidence="10" key="2">
    <citation type="journal article" date="2018" name="Int. J. Biol. Macromol.">
        <title>Structural and enzymatic analysis of the cytochrome b5 reductase domain of Ulva prolifera nitrate reductase.</title>
        <authorList>
            <person name="You C."/>
            <person name="Liu C."/>
            <person name="Li Y."/>
            <person name="Jiang P."/>
            <person name="Ma Q."/>
        </authorList>
    </citation>
    <scope>X-RAY CRYSTALLOGRAPHY (1.76 ANGSTROMS) OF 572-863 IN COMPLEX WITH FAD</scope>
    <scope>CATALYTIC ACTIVITY</scope>
    <scope>COFACTOR</scope>
    <scope>BIOPHYSICOCHEMICAL PROPERTIES</scope>
    <scope>MUTAGENESIS OF HIS-640; ARG-659; THR-662 AND CYS-835</scope>
    <scope>3D-STRUCTURE MODELING OF THE FAD-BINDING DOMAIN IN COMPLEX WITH CYTOCHROME B5 FRAGMENT</scope>
</reference>